<name>YE7A_SCHPO</name>
<accession>O14162</accession>
<sequence length="785" mass="86647">MNVYVQRDDVGLGQIHRFRIFVQSGGNLHSATSSTTVPPTVNLNSVTKKESGSIEDRAGSGGMTISSGENISKQISENNSSTNPKHANSESSPLLSSDFSSSSKDYHKVGAFTDNTNAINIPEQTRGVSHTSSSPSVGTSFSSINLREVKNPLAGSDSTAPFINSTNSVLWIRVRNREARFRQAAYLQGPFTLCVSVWNDQFFDEKNSLLNFDPQVQPSTSFWVCVPYSCFSNQQPIYIEIASQAIFKDRSINFELAISQSQHSIRAMSAADIDTLHAFPALHVEHQTPENLWRLPYSSFHSKNSHLVVLTHGMHSNVGADMEYLKEKLIESSKSVKELVVVRGFTGNYCQTEKGVRWLGKRLGEWLLDITGWGSASFPRYSHISVVAHSLGGLVQTYAVGYVHAKTHGAFFQAIHPVFFVTLATPWLGVAGEHPSYIGKALSYGIIGKTGQDLSLTPLNHSIESRPFLVLMSDPSTPFFQAVSFFEKRILFANTTNDYIVPFGTSAMEVSSLGKVEEAEGSDKVMPTHMENGISPTLKENEQTVQSVGDNAKKIHASSEESGSSFSKALKSFVGLFSYSASKTTDTEIPLVKNEDENARKPTEPNCLGSDELDVSNSSNQFFCSAPKLDPTSTFSGVAQRVVNTFTNLFIPAVPTDSYFFKYHLHKVVVSDNVHDPAASFSTFDGITELNNMNNGFLSNEITIAKNWHRLAWRKVAVRLDGDAHNTMIVRRRFPNAYGWTVIKHLTEILFEQNTSTAYMNPISFDETTTAAWLSEIYEDNSISV</sequence>
<feature type="chain" id="PRO_0000116704" description="Putative lipase C4A8.10">
    <location>
        <begin position="1"/>
        <end position="785"/>
    </location>
</feature>
<feature type="region of interest" description="Disordered" evidence="2">
    <location>
        <begin position="29"/>
        <end position="99"/>
    </location>
</feature>
<feature type="region of interest" description="Disordered" evidence="2">
    <location>
        <begin position="115"/>
        <end position="140"/>
    </location>
</feature>
<feature type="compositionally biased region" description="Low complexity" evidence="2">
    <location>
        <begin position="32"/>
        <end position="41"/>
    </location>
</feature>
<feature type="compositionally biased region" description="Basic and acidic residues" evidence="2">
    <location>
        <begin position="47"/>
        <end position="58"/>
    </location>
</feature>
<feature type="compositionally biased region" description="Polar residues" evidence="2">
    <location>
        <begin position="63"/>
        <end position="86"/>
    </location>
</feature>
<feature type="compositionally biased region" description="Low complexity" evidence="2">
    <location>
        <begin position="89"/>
        <end position="99"/>
    </location>
</feature>
<feature type="compositionally biased region" description="Low complexity" evidence="2">
    <location>
        <begin position="127"/>
        <end position="140"/>
    </location>
</feature>
<feature type="active site" description="Charge relay system" evidence="1">
    <location>
        <position position="390"/>
    </location>
</feature>
<protein>
    <recommendedName>
        <fullName>Putative lipase C4A8.10</fullName>
        <ecNumber>3.1.-.-</ecNumber>
    </recommendedName>
</protein>
<comment type="similarity">
    <text evidence="3">Belongs to the putative lipase ROG1 family.</text>
</comment>
<keyword id="KW-0378">Hydrolase</keyword>
<keyword id="KW-0442">Lipid degradation</keyword>
<keyword id="KW-0443">Lipid metabolism</keyword>
<keyword id="KW-1185">Reference proteome</keyword>
<proteinExistence type="inferred from homology"/>
<reference key="1">
    <citation type="journal article" date="2002" name="Nature">
        <title>The genome sequence of Schizosaccharomyces pombe.</title>
        <authorList>
            <person name="Wood V."/>
            <person name="Gwilliam R."/>
            <person name="Rajandream M.A."/>
            <person name="Lyne M.H."/>
            <person name="Lyne R."/>
            <person name="Stewart A."/>
            <person name="Sgouros J.G."/>
            <person name="Peat N."/>
            <person name="Hayles J."/>
            <person name="Baker S.G."/>
            <person name="Basham D."/>
            <person name="Bowman S."/>
            <person name="Brooks K."/>
            <person name="Brown D."/>
            <person name="Brown S."/>
            <person name="Chillingworth T."/>
            <person name="Churcher C.M."/>
            <person name="Collins M."/>
            <person name="Connor R."/>
            <person name="Cronin A."/>
            <person name="Davis P."/>
            <person name="Feltwell T."/>
            <person name="Fraser A."/>
            <person name="Gentles S."/>
            <person name="Goble A."/>
            <person name="Hamlin N."/>
            <person name="Harris D.E."/>
            <person name="Hidalgo J."/>
            <person name="Hodgson G."/>
            <person name="Holroyd S."/>
            <person name="Hornsby T."/>
            <person name="Howarth S."/>
            <person name="Huckle E.J."/>
            <person name="Hunt S."/>
            <person name="Jagels K."/>
            <person name="James K.D."/>
            <person name="Jones L."/>
            <person name="Jones M."/>
            <person name="Leather S."/>
            <person name="McDonald S."/>
            <person name="McLean J."/>
            <person name="Mooney P."/>
            <person name="Moule S."/>
            <person name="Mungall K.L."/>
            <person name="Murphy L.D."/>
            <person name="Niblett D."/>
            <person name="Odell C."/>
            <person name="Oliver K."/>
            <person name="O'Neil S."/>
            <person name="Pearson D."/>
            <person name="Quail M.A."/>
            <person name="Rabbinowitsch E."/>
            <person name="Rutherford K.M."/>
            <person name="Rutter S."/>
            <person name="Saunders D."/>
            <person name="Seeger K."/>
            <person name="Sharp S."/>
            <person name="Skelton J."/>
            <person name="Simmonds M.N."/>
            <person name="Squares R."/>
            <person name="Squares S."/>
            <person name="Stevens K."/>
            <person name="Taylor K."/>
            <person name="Taylor R.G."/>
            <person name="Tivey A."/>
            <person name="Walsh S.V."/>
            <person name="Warren T."/>
            <person name="Whitehead S."/>
            <person name="Woodward J.R."/>
            <person name="Volckaert G."/>
            <person name="Aert R."/>
            <person name="Robben J."/>
            <person name="Grymonprez B."/>
            <person name="Weltjens I."/>
            <person name="Vanstreels E."/>
            <person name="Rieger M."/>
            <person name="Schaefer M."/>
            <person name="Mueller-Auer S."/>
            <person name="Gabel C."/>
            <person name="Fuchs M."/>
            <person name="Duesterhoeft A."/>
            <person name="Fritzc C."/>
            <person name="Holzer E."/>
            <person name="Moestl D."/>
            <person name="Hilbert H."/>
            <person name="Borzym K."/>
            <person name="Langer I."/>
            <person name="Beck A."/>
            <person name="Lehrach H."/>
            <person name="Reinhardt R."/>
            <person name="Pohl T.M."/>
            <person name="Eger P."/>
            <person name="Zimmermann W."/>
            <person name="Wedler H."/>
            <person name="Wambutt R."/>
            <person name="Purnelle B."/>
            <person name="Goffeau A."/>
            <person name="Cadieu E."/>
            <person name="Dreano S."/>
            <person name="Gloux S."/>
            <person name="Lelaure V."/>
            <person name="Mottier S."/>
            <person name="Galibert F."/>
            <person name="Aves S.J."/>
            <person name="Xiang Z."/>
            <person name="Hunt C."/>
            <person name="Moore K."/>
            <person name="Hurst S.M."/>
            <person name="Lucas M."/>
            <person name="Rochet M."/>
            <person name="Gaillardin C."/>
            <person name="Tallada V.A."/>
            <person name="Garzon A."/>
            <person name="Thode G."/>
            <person name="Daga R.R."/>
            <person name="Cruzado L."/>
            <person name="Jimenez J."/>
            <person name="Sanchez M."/>
            <person name="del Rey F."/>
            <person name="Benito J."/>
            <person name="Dominguez A."/>
            <person name="Revuelta J.L."/>
            <person name="Moreno S."/>
            <person name="Armstrong J."/>
            <person name="Forsburg S.L."/>
            <person name="Cerutti L."/>
            <person name="Lowe T."/>
            <person name="McCombie W.R."/>
            <person name="Paulsen I."/>
            <person name="Potashkin J."/>
            <person name="Shpakovski G.V."/>
            <person name="Ussery D."/>
            <person name="Barrell B.G."/>
            <person name="Nurse P."/>
        </authorList>
    </citation>
    <scope>NUCLEOTIDE SEQUENCE [LARGE SCALE GENOMIC DNA]</scope>
    <source>
        <strain>972 / ATCC 24843</strain>
    </source>
</reference>
<reference key="2">
    <citation type="journal article" date="2011" name="Science">
        <title>Comparative functional genomics of the fission yeasts.</title>
        <authorList>
            <person name="Rhind N."/>
            <person name="Chen Z."/>
            <person name="Yassour M."/>
            <person name="Thompson D.A."/>
            <person name="Haas B.J."/>
            <person name="Habib N."/>
            <person name="Wapinski I."/>
            <person name="Roy S."/>
            <person name="Lin M.F."/>
            <person name="Heiman D.I."/>
            <person name="Young S.K."/>
            <person name="Furuya K."/>
            <person name="Guo Y."/>
            <person name="Pidoux A."/>
            <person name="Chen H.M."/>
            <person name="Robbertse B."/>
            <person name="Goldberg J.M."/>
            <person name="Aoki K."/>
            <person name="Bayne E.H."/>
            <person name="Berlin A.M."/>
            <person name="Desjardins C.A."/>
            <person name="Dobbs E."/>
            <person name="Dukaj L."/>
            <person name="Fan L."/>
            <person name="FitzGerald M.G."/>
            <person name="French C."/>
            <person name="Gujja S."/>
            <person name="Hansen K."/>
            <person name="Keifenheim D."/>
            <person name="Levin J.Z."/>
            <person name="Mosher R.A."/>
            <person name="Mueller C.A."/>
            <person name="Pfiffner J."/>
            <person name="Priest M."/>
            <person name="Russ C."/>
            <person name="Smialowska A."/>
            <person name="Swoboda P."/>
            <person name="Sykes S.M."/>
            <person name="Vaughn M."/>
            <person name="Vengrova S."/>
            <person name="Yoder R."/>
            <person name="Zeng Q."/>
            <person name="Allshire R."/>
            <person name="Baulcombe D."/>
            <person name="Birren B.W."/>
            <person name="Brown W."/>
            <person name="Ekwall K."/>
            <person name="Kellis M."/>
            <person name="Leatherwood J."/>
            <person name="Levin H."/>
            <person name="Margalit H."/>
            <person name="Martienssen R."/>
            <person name="Nieduszynski C.A."/>
            <person name="Spatafora J.W."/>
            <person name="Friedman N."/>
            <person name="Dalgaard J.Z."/>
            <person name="Baumann P."/>
            <person name="Niki H."/>
            <person name="Regev A."/>
            <person name="Nusbaum C."/>
        </authorList>
    </citation>
    <scope>REVISION OF GENE MODEL</scope>
</reference>
<organism>
    <name type="scientific">Schizosaccharomyces pombe (strain 972 / ATCC 24843)</name>
    <name type="common">Fission yeast</name>
    <dbReference type="NCBI Taxonomy" id="284812"/>
    <lineage>
        <taxon>Eukaryota</taxon>
        <taxon>Fungi</taxon>
        <taxon>Dikarya</taxon>
        <taxon>Ascomycota</taxon>
        <taxon>Taphrinomycotina</taxon>
        <taxon>Schizosaccharomycetes</taxon>
        <taxon>Schizosaccharomycetales</taxon>
        <taxon>Schizosaccharomycetaceae</taxon>
        <taxon>Schizosaccharomyces</taxon>
    </lineage>
</organism>
<dbReference type="EC" id="3.1.-.-"/>
<dbReference type="EMBL" id="CU329670">
    <property type="protein sequence ID" value="CAB11480.2"/>
    <property type="molecule type" value="Genomic_DNA"/>
</dbReference>
<dbReference type="PIR" id="T38780">
    <property type="entry name" value="T38780"/>
</dbReference>
<dbReference type="RefSeq" id="NP_593822.2">
    <property type="nucleotide sequence ID" value="NM_001019251.2"/>
</dbReference>
<dbReference type="BioGRID" id="280031">
    <property type="interactions" value="38"/>
</dbReference>
<dbReference type="FunCoup" id="O14162">
    <property type="interactions" value="21"/>
</dbReference>
<dbReference type="STRING" id="284812.O14162"/>
<dbReference type="ESTHER" id="schpo-ye7a">
    <property type="family name" value="Duf_676"/>
</dbReference>
<dbReference type="iPTMnet" id="O14162"/>
<dbReference type="PaxDb" id="4896-SPAC4A8.10.1"/>
<dbReference type="EnsemblFungi" id="SPAC4A8.10.1">
    <property type="protein sequence ID" value="SPAC4A8.10.1:pep"/>
    <property type="gene ID" value="SPAC4A8.10"/>
</dbReference>
<dbReference type="PomBase" id="SPAC4A8.10"/>
<dbReference type="VEuPathDB" id="FungiDB:SPAC4A8.10"/>
<dbReference type="eggNOG" id="KOG4372">
    <property type="taxonomic scope" value="Eukaryota"/>
</dbReference>
<dbReference type="HOGENOM" id="CLU_007367_1_0_1"/>
<dbReference type="InParanoid" id="O14162"/>
<dbReference type="OMA" id="CFITADQ"/>
<dbReference type="PRO" id="PR:O14162"/>
<dbReference type="Proteomes" id="UP000002485">
    <property type="component" value="Chromosome I"/>
</dbReference>
<dbReference type="GO" id="GO:0005829">
    <property type="term" value="C:cytosol"/>
    <property type="evidence" value="ECO:0007005"/>
    <property type="project" value="PomBase"/>
</dbReference>
<dbReference type="GO" id="GO:0005811">
    <property type="term" value="C:lipid droplet"/>
    <property type="evidence" value="ECO:0000266"/>
    <property type="project" value="PomBase"/>
</dbReference>
<dbReference type="GO" id="GO:0047372">
    <property type="term" value="F:monoacylglycerol lipase activity"/>
    <property type="evidence" value="ECO:0000318"/>
    <property type="project" value="GO_Central"/>
</dbReference>
<dbReference type="GO" id="GO:0016042">
    <property type="term" value="P:lipid catabolic process"/>
    <property type="evidence" value="ECO:0000266"/>
    <property type="project" value="PomBase"/>
</dbReference>
<dbReference type="GO" id="GO:0006629">
    <property type="term" value="P:lipid metabolic process"/>
    <property type="evidence" value="ECO:0000318"/>
    <property type="project" value="GO_Central"/>
</dbReference>
<dbReference type="Gene3D" id="3.40.50.1820">
    <property type="entry name" value="alpha/beta hydrolase"/>
    <property type="match status" value="1"/>
</dbReference>
<dbReference type="InterPro" id="IPR029058">
    <property type="entry name" value="AB_hydrolase_fold"/>
</dbReference>
<dbReference type="InterPro" id="IPR007751">
    <property type="entry name" value="DUF676_lipase-like"/>
</dbReference>
<dbReference type="InterPro" id="IPR044294">
    <property type="entry name" value="Lipase-like"/>
</dbReference>
<dbReference type="InterPro" id="IPR016445">
    <property type="entry name" value="Rog1_fam"/>
</dbReference>
<dbReference type="PANTHER" id="PTHR12482:SF62">
    <property type="entry name" value="LIPASE ROG1-RELATED"/>
    <property type="match status" value="1"/>
</dbReference>
<dbReference type="PANTHER" id="PTHR12482">
    <property type="entry name" value="LIPASE ROG1-RELATED-RELATED"/>
    <property type="match status" value="1"/>
</dbReference>
<dbReference type="Pfam" id="PF05057">
    <property type="entry name" value="DUF676"/>
    <property type="match status" value="1"/>
</dbReference>
<dbReference type="PIRSF" id="PIRSF005412">
    <property type="entry name" value="UCP005412_abhydr"/>
    <property type="match status" value="1"/>
</dbReference>
<dbReference type="SUPFAM" id="SSF53474">
    <property type="entry name" value="alpha/beta-Hydrolases"/>
    <property type="match status" value="1"/>
</dbReference>
<gene>
    <name type="ORF">SPAC4A8.10</name>
</gene>
<evidence type="ECO:0000250" key="1"/>
<evidence type="ECO:0000256" key="2">
    <source>
        <dbReference type="SAM" id="MobiDB-lite"/>
    </source>
</evidence>
<evidence type="ECO:0000305" key="3"/>